<accession>A1JKT8</accession>
<organism>
    <name type="scientific">Yersinia enterocolitica serotype O:8 / biotype 1B (strain NCTC 13174 / 8081)</name>
    <dbReference type="NCBI Taxonomy" id="393305"/>
    <lineage>
        <taxon>Bacteria</taxon>
        <taxon>Pseudomonadati</taxon>
        <taxon>Pseudomonadota</taxon>
        <taxon>Gammaproteobacteria</taxon>
        <taxon>Enterobacterales</taxon>
        <taxon>Yersiniaceae</taxon>
        <taxon>Yersinia</taxon>
    </lineage>
</organism>
<protein>
    <recommendedName>
        <fullName evidence="1">2-succinyl-5-enolpyruvyl-6-hydroxy-3-cyclohexene-1-carboxylate synthase</fullName>
        <shortName evidence="1">SEPHCHC synthase</shortName>
        <ecNumber evidence="1">2.2.1.9</ecNumber>
    </recommendedName>
    <alternativeName>
        <fullName evidence="1">Menaquinone biosynthesis protein MenD</fullName>
    </alternativeName>
</protein>
<proteinExistence type="inferred from homology"/>
<comment type="function">
    <text evidence="1">Catalyzes the thiamine diphosphate-dependent decarboxylation of 2-oxoglutarate and the subsequent addition of the resulting succinic semialdehyde-thiamine pyrophosphate anion to isochorismate to yield 2-succinyl-5-enolpyruvyl-6-hydroxy-3-cyclohexene-1-carboxylate (SEPHCHC).</text>
</comment>
<comment type="catalytic activity">
    <reaction evidence="1">
        <text>isochorismate + 2-oxoglutarate + H(+) = 5-enolpyruvoyl-6-hydroxy-2-succinyl-cyclohex-3-ene-1-carboxylate + CO2</text>
        <dbReference type="Rhea" id="RHEA:25593"/>
        <dbReference type="ChEBI" id="CHEBI:15378"/>
        <dbReference type="ChEBI" id="CHEBI:16526"/>
        <dbReference type="ChEBI" id="CHEBI:16810"/>
        <dbReference type="ChEBI" id="CHEBI:29780"/>
        <dbReference type="ChEBI" id="CHEBI:58818"/>
        <dbReference type="EC" id="2.2.1.9"/>
    </reaction>
</comment>
<comment type="cofactor">
    <cofactor evidence="1">
        <name>Mg(2+)</name>
        <dbReference type="ChEBI" id="CHEBI:18420"/>
    </cofactor>
    <cofactor evidence="1">
        <name>Mn(2+)</name>
        <dbReference type="ChEBI" id="CHEBI:29035"/>
    </cofactor>
</comment>
<comment type="cofactor">
    <cofactor evidence="1">
        <name>thiamine diphosphate</name>
        <dbReference type="ChEBI" id="CHEBI:58937"/>
    </cofactor>
    <text evidence="1">Binds 1 thiamine pyrophosphate per subunit.</text>
</comment>
<comment type="pathway">
    <text evidence="1">Quinol/quinone metabolism; 1,4-dihydroxy-2-naphthoate biosynthesis; 1,4-dihydroxy-2-naphthoate from chorismate: step 2/7.</text>
</comment>
<comment type="pathway">
    <text evidence="1">Quinol/quinone metabolism; menaquinone biosynthesis.</text>
</comment>
<comment type="subunit">
    <text evidence="1">Homodimer.</text>
</comment>
<comment type="similarity">
    <text evidence="1">Belongs to the TPP enzyme family. MenD subfamily.</text>
</comment>
<feature type="chain" id="PRO_0000341889" description="2-succinyl-5-enolpyruvyl-6-hydroxy-3-cyclohexene-1-carboxylate synthase">
    <location>
        <begin position="1"/>
        <end position="557"/>
    </location>
</feature>
<evidence type="ECO:0000255" key="1">
    <source>
        <dbReference type="HAMAP-Rule" id="MF_01659"/>
    </source>
</evidence>
<dbReference type="EC" id="2.2.1.9" evidence="1"/>
<dbReference type="EMBL" id="AM286415">
    <property type="protein sequence ID" value="CAL11468.1"/>
    <property type="molecule type" value="Genomic_DNA"/>
</dbReference>
<dbReference type="RefSeq" id="WP_011815959.1">
    <property type="nucleotide sequence ID" value="NC_008800.1"/>
</dbReference>
<dbReference type="RefSeq" id="YP_001005690.1">
    <property type="nucleotide sequence ID" value="NC_008800.1"/>
</dbReference>
<dbReference type="SMR" id="A1JKT8"/>
<dbReference type="KEGG" id="yen:YE1375"/>
<dbReference type="PATRIC" id="fig|393305.7.peg.1495"/>
<dbReference type="eggNOG" id="COG1165">
    <property type="taxonomic scope" value="Bacteria"/>
</dbReference>
<dbReference type="HOGENOM" id="CLU_006051_3_0_6"/>
<dbReference type="OrthoDB" id="9791859at2"/>
<dbReference type="UniPathway" id="UPA00079"/>
<dbReference type="UniPathway" id="UPA01057">
    <property type="reaction ID" value="UER00164"/>
</dbReference>
<dbReference type="Proteomes" id="UP000000642">
    <property type="component" value="Chromosome"/>
</dbReference>
<dbReference type="GO" id="GO:0070204">
    <property type="term" value="F:2-succinyl-5-enolpyruvyl-6-hydroxy-3-cyclohexene-1-carboxylic-acid synthase activity"/>
    <property type="evidence" value="ECO:0007669"/>
    <property type="project" value="UniProtKB-UniRule"/>
</dbReference>
<dbReference type="GO" id="GO:0000287">
    <property type="term" value="F:magnesium ion binding"/>
    <property type="evidence" value="ECO:0007669"/>
    <property type="project" value="UniProtKB-UniRule"/>
</dbReference>
<dbReference type="GO" id="GO:0030145">
    <property type="term" value="F:manganese ion binding"/>
    <property type="evidence" value="ECO:0007669"/>
    <property type="project" value="UniProtKB-UniRule"/>
</dbReference>
<dbReference type="GO" id="GO:0030976">
    <property type="term" value="F:thiamine pyrophosphate binding"/>
    <property type="evidence" value="ECO:0007669"/>
    <property type="project" value="UniProtKB-UniRule"/>
</dbReference>
<dbReference type="GO" id="GO:0009234">
    <property type="term" value="P:menaquinone biosynthetic process"/>
    <property type="evidence" value="ECO:0007669"/>
    <property type="project" value="UniProtKB-UniRule"/>
</dbReference>
<dbReference type="CDD" id="cd07037">
    <property type="entry name" value="TPP_PYR_MenD"/>
    <property type="match status" value="1"/>
</dbReference>
<dbReference type="CDD" id="cd02009">
    <property type="entry name" value="TPP_SHCHC_synthase"/>
    <property type="match status" value="1"/>
</dbReference>
<dbReference type="FunFam" id="3.40.50.970:FF:000029">
    <property type="entry name" value="2-succinyl-5-enolpyruvyl-6-hydroxy-3-cyclohexene-1-carboxylate synthase"/>
    <property type="match status" value="1"/>
</dbReference>
<dbReference type="Gene3D" id="3.40.50.970">
    <property type="match status" value="2"/>
</dbReference>
<dbReference type="Gene3D" id="3.40.50.1220">
    <property type="entry name" value="TPP-binding domain"/>
    <property type="match status" value="1"/>
</dbReference>
<dbReference type="HAMAP" id="MF_01659">
    <property type="entry name" value="MenD"/>
    <property type="match status" value="1"/>
</dbReference>
<dbReference type="InterPro" id="IPR029035">
    <property type="entry name" value="DHS-like_NAD/FAD-binding_dom"/>
</dbReference>
<dbReference type="InterPro" id="IPR004433">
    <property type="entry name" value="MenaQ_synth_MenD"/>
</dbReference>
<dbReference type="InterPro" id="IPR032264">
    <property type="entry name" value="MenD_middle"/>
</dbReference>
<dbReference type="InterPro" id="IPR029061">
    <property type="entry name" value="THDP-binding"/>
</dbReference>
<dbReference type="InterPro" id="IPR012001">
    <property type="entry name" value="Thiamin_PyroP_enz_TPP-bd_dom"/>
</dbReference>
<dbReference type="InterPro" id="IPR011766">
    <property type="entry name" value="TPP_enzyme_TPP-bd"/>
</dbReference>
<dbReference type="NCBIfam" id="TIGR00173">
    <property type="entry name" value="menD"/>
    <property type="match status" value="1"/>
</dbReference>
<dbReference type="PANTHER" id="PTHR42916">
    <property type="entry name" value="2-SUCCINYL-5-ENOLPYRUVYL-6-HYDROXY-3-CYCLOHEXENE-1-CARBOXYLATE SYNTHASE"/>
    <property type="match status" value="1"/>
</dbReference>
<dbReference type="PANTHER" id="PTHR42916:SF1">
    <property type="entry name" value="PROTEIN PHYLLO, CHLOROPLASTIC"/>
    <property type="match status" value="1"/>
</dbReference>
<dbReference type="Pfam" id="PF02775">
    <property type="entry name" value="TPP_enzyme_C"/>
    <property type="match status" value="1"/>
</dbReference>
<dbReference type="Pfam" id="PF16582">
    <property type="entry name" value="TPP_enzyme_M_2"/>
    <property type="match status" value="1"/>
</dbReference>
<dbReference type="Pfam" id="PF02776">
    <property type="entry name" value="TPP_enzyme_N"/>
    <property type="match status" value="1"/>
</dbReference>
<dbReference type="PIRSF" id="PIRSF004983">
    <property type="entry name" value="MenD"/>
    <property type="match status" value="1"/>
</dbReference>
<dbReference type="SUPFAM" id="SSF52467">
    <property type="entry name" value="DHS-like NAD/FAD-binding domain"/>
    <property type="match status" value="1"/>
</dbReference>
<dbReference type="SUPFAM" id="SSF52518">
    <property type="entry name" value="Thiamin diphosphate-binding fold (THDP-binding)"/>
    <property type="match status" value="2"/>
</dbReference>
<reference key="1">
    <citation type="journal article" date="2006" name="PLoS Genet.">
        <title>The complete genome sequence and comparative genome analysis of the high pathogenicity Yersinia enterocolitica strain 8081.</title>
        <authorList>
            <person name="Thomson N.R."/>
            <person name="Howard S."/>
            <person name="Wren B.W."/>
            <person name="Holden M.T.G."/>
            <person name="Crossman L."/>
            <person name="Challis G.L."/>
            <person name="Churcher C."/>
            <person name="Mungall K."/>
            <person name="Brooks K."/>
            <person name="Chillingworth T."/>
            <person name="Feltwell T."/>
            <person name="Abdellah Z."/>
            <person name="Hauser H."/>
            <person name="Jagels K."/>
            <person name="Maddison M."/>
            <person name="Moule S."/>
            <person name="Sanders M."/>
            <person name="Whitehead S."/>
            <person name="Quail M.A."/>
            <person name="Dougan G."/>
            <person name="Parkhill J."/>
            <person name="Prentice M.B."/>
        </authorList>
    </citation>
    <scope>NUCLEOTIDE SEQUENCE [LARGE SCALE GENOMIC DNA]</scope>
    <source>
        <strain>NCTC 13174 / 8081</strain>
    </source>
</reference>
<keyword id="KW-0460">Magnesium</keyword>
<keyword id="KW-0464">Manganese</keyword>
<keyword id="KW-0474">Menaquinone biosynthesis</keyword>
<keyword id="KW-0479">Metal-binding</keyword>
<keyword id="KW-0786">Thiamine pyrophosphate</keyword>
<keyword id="KW-0808">Transferase</keyword>
<name>MEND_YERE8</name>
<sequence>MSTSVFNRRWAALLLEALSRHGVQHICIAPGSRSTPLTLAAAANPSLVCHTHFDERGLGHLALGLAKASTEPVAVIVTSGTAAANLYPALIEAGLTGERLILLTADRPPELIDCGANQAIRQPGMFASHPTVSLNLPRPTPDIPASWLVSTIDSAMAQLHHGGLHVNCPFAEPLYGGDEQCYADWSATLGDWWQDCHPWLRQSRPLPQIEQADWLFWRQKRGVVIAGRMTAEEGEQLAQWAELLGWPLIGDVLSQTGQPLPCADLWLAHPGAQRVLAQAQIVLQFGSSLTGKRLLQWQAQCQPQEYWLVDSIAGRLDPANHRGRRIISPVNEWLEQHPALRRTPWASELIIWSENAHAHVEQALNEQFSEAAVAHRLAELLPENGQLFVGNSLIVRLIDALGQLPAGYPVYSNRGASGIDGLLSTAAGVQRATAKPTLAIVGDLSALYDLNALALLRQSSAPTVLLVVNNNGGQIFSLLPTPEADRQRFYCMPQNVSFEHAAAMFGLGYSRPESGLMLKQQVDQCWLRGGVTLIEIEVPPSQGAETLQQLVQQVAQL</sequence>
<gene>
    <name evidence="1" type="primary">menD</name>
    <name type="ordered locus">YE1375</name>
</gene>